<evidence type="ECO:0000255" key="1">
    <source>
        <dbReference type="HAMAP-Rule" id="MF_00381"/>
    </source>
</evidence>
<evidence type="ECO:0000269" key="2">
    <source>
    </source>
</evidence>
<evidence type="ECO:0000303" key="3">
    <source>
    </source>
</evidence>
<proteinExistence type="inferred from homology"/>
<name>IHFB_SALTY</name>
<protein>
    <recommendedName>
        <fullName evidence="1">Integration host factor subunit beta</fullName>
        <shortName evidence="1">IHF-beta</shortName>
    </recommendedName>
</protein>
<accession>P64394</accession>
<accession>Q8XFX6</accession>
<keyword id="KW-0233">DNA recombination</keyword>
<keyword id="KW-0238">DNA-binding</keyword>
<keyword id="KW-1185">Reference proteome</keyword>
<keyword id="KW-0804">Transcription</keyword>
<keyword id="KW-0805">Transcription regulation</keyword>
<keyword id="KW-0810">Translation regulation</keyword>
<sequence length="94" mass="10621">MTKSELIERLATQQSHIPAKAVEDAVKEMLEHMASTLAQGERIEIRGFGSFSLHYRAPRTGRNPKTGDKVELEGKYVPHFKPGKELRDRANIYG</sequence>
<comment type="function">
    <text evidence="1">This protein is one of the two subunits of integration host factor, a specific DNA-binding protein that functions in genetic recombination as well as in transcriptional and translational control.</text>
</comment>
<comment type="subunit">
    <text evidence="1">Heterodimer of an alpha and a beta chain.</text>
</comment>
<comment type="disruption phenotype">
    <text evidence="2">Decreases expression of genes encoding virulence proteins (PubMed:19229334). Drastically decreases survival in host macrophages (PubMed:19229334). Decreases virulence in mouse (PubMed:19229334).</text>
</comment>
<comment type="similarity">
    <text evidence="1">Belongs to the bacterial histone-like protein family.</text>
</comment>
<reference key="1">
    <citation type="journal article" date="2001" name="Nature">
        <title>Complete genome sequence of Salmonella enterica serovar Typhimurium LT2.</title>
        <authorList>
            <person name="McClelland M."/>
            <person name="Sanderson K.E."/>
            <person name="Spieth J."/>
            <person name="Clifton S.W."/>
            <person name="Latreille P."/>
            <person name="Courtney L."/>
            <person name="Porwollik S."/>
            <person name="Ali J."/>
            <person name="Dante M."/>
            <person name="Du F."/>
            <person name="Hou S."/>
            <person name="Layman D."/>
            <person name="Leonard S."/>
            <person name="Nguyen C."/>
            <person name="Scott K."/>
            <person name="Holmes A."/>
            <person name="Grewal N."/>
            <person name="Mulvaney E."/>
            <person name="Ryan E."/>
            <person name="Sun H."/>
            <person name="Florea L."/>
            <person name="Miller W."/>
            <person name="Stoneking T."/>
            <person name="Nhan M."/>
            <person name="Waterston R."/>
            <person name="Wilson R.K."/>
        </authorList>
    </citation>
    <scope>NUCLEOTIDE SEQUENCE [LARGE SCALE GENOMIC DNA]</scope>
    <source>
        <strain>LT2 / SGSC1412 / ATCC 700720</strain>
    </source>
</reference>
<reference key="2">
    <citation type="journal article" date="2009" name="PLoS Pathog.">
        <title>Coordinated regulation of virulence during systemic infection of Salmonella enterica serovar Typhimurium.</title>
        <authorList>
            <person name="Yoon H."/>
            <person name="McDermott J.E."/>
            <person name="Porwollik S."/>
            <person name="McClelland M."/>
            <person name="Heffron F."/>
        </authorList>
    </citation>
    <scope>DISRUPTION PHENOTYPE</scope>
    <source>
        <strain evidence="3">14028s / SGSC 2262</strain>
    </source>
</reference>
<dbReference type="EMBL" id="AE006468">
    <property type="protein sequence ID" value="AAL19916.1"/>
    <property type="molecule type" value="Genomic_DNA"/>
</dbReference>
<dbReference type="RefSeq" id="NP_459957.1">
    <property type="nucleotide sequence ID" value="NC_003197.2"/>
</dbReference>
<dbReference type="RefSeq" id="WP_000167332.1">
    <property type="nucleotide sequence ID" value="NC_003197.2"/>
</dbReference>
<dbReference type="SMR" id="P64394"/>
<dbReference type="STRING" id="99287.STM0982"/>
<dbReference type="PaxDb" id="99287-STM0982"/>
<dbReference type="GeneID" id="1252500"/>
<dbReference type="GeneID" id="84237116"/>
<dbReference type="KEGG" id="stm:STM0982"/>
<dbReference type="PATRIC" id="fig|99287.12.peg.1035"/>
<dbReference type="HOGENOM" id="CLU_105066_2_0_6"/>
<dbReference type="OMA" id="DQKSVPF"/>
<dbReference type="PhylomeDB" id="P64394"/>
<dbReference type="BioCyc" id="SENT99287:STM0982-MONOMER"/>
<dbReference type="PHI-base" id="PHI:2673"/>
<dbReference type="Proteomes" id="UP000001014">
    <property type="component" value="Chromosome"/>
</dbReference>
<dbReference type="GO" id="GO:0005694">
    <property type="term" value="C:chromosome"/>
    <property type="evidence" value="ECO:0007669"/>
    <property type="project" value="InterPro"/>
</dbReference>
<dbReference type="GO" id="GO:0005829">
    <property type="term" value="C:cytosol"/>
    <property type="evidence" value="ECO:0000318"/>
    <property type="project" value="GO_Central"/>
</dbReference>
<dbReference type="GO" id="GO:0003677">
    <property type="term" value="F:DNA binding"/>
    <property type="evidence" value="ECO:0000318"/>
    <property type="project" value="GO_Central"/>
</dbReference>
<dbReference type="GO" id="GO:0030527">
    <property type="term" value="F:structural constituent of chromatin"/>
    <property type="evidence" value="ECO:0007669"/>
    <property type="project" value="InterPro"/>
</dbReference>
<dbReference type="GO" id="GO:0006310">
    <property type="term" value="P:DNA recombination"/>
    <property type="evidence" value="ECO:0007669"/>
    <property type="project" value="UniProtKB-UniRule"/>
</dbReference>
<dbReference type="GO" id="GO:0006355">
    <property type="term" value="P:regulation of DNA-templated transcription"/>
    <property type="evidence" value="ECO:0007669"/>
    <property type="project" value="UniProtKB-UniRule"/>
</dbReference>
<dbReference type="GO" id="GO:0006417">
    <property type="term" value="P:regulation of translation"/>
    <property type="evidence" value="ECO:0007669"/>
    <property type="project" value="UniProtKB-UniRule"/>
</dbReference>
<dbReference type="CDD" id="cd13836">
    <property type="entry name" value="IHF_B"/>
    <property type="match status" value="1"/>
</dbReference>
<dbReference type="FunFam" id="4.10.520.10:FF:000003">
    <property type="entry name" value="Integration host factor subunit beta"/>
    <property type="match status" value="1"/>
</dbReference>
<dbReference type="Gene3D" id="4.10.520.10">
    <property type="entry name" value="IHF-like DNA-binding proteins"/>
    <property type="match status" value="1"/>
</dbReference>
<dbReference type="HAMAP" id="MF_00381">
    <property type="entry name" value="IHF_beta"/>
    <property type="match status" value="1"/>
</dbReference>
<dbReference type="InterPro" id="IPR000119">
    <property type="entry name" value="Hist_DNA-bd"/>
</dbReference>
<dbReference type="InterPro" id="IPR020816">
    <property type="entry name" value="Histone-like_DNA-bd_CS"/>
</dbReference>
<dbReference type="InterPro" id="IPR010992">
    <property type="entry name" value="IHF-like_DNA-bd_dom_sf"/>
</dbReference>
<dbReference type="InterPro" id="IPR005685">
    <property type="entry name" value="IHF_beta"/>
</dbReference>
<dbReference type="NCBIfam" id="TIGR00988">
    <property type="entry name" value="hip"/>
    <property type="match status" value="1"/>
</dbReference>
<dbReference type="NCBIfam" id="NF001222">
    <property type="entry name" value="PRK00199.1"/>
    <property type="match status" value="1"/>
</dbReference>
<dbReference type="PANTHER" id="PTHR33175">
    <property type="entry name" value="DNA-BINDING PROTEIN HU"/>
    <property type="match status" value="1"/>
</dbReference>
<dbReference type="PANTHER" id="PTHR33175:SF5">
    <property type="entry name" value="INTEGRATION HOST FACTOR SUBUNIT BETA"/>
    <property type="match status" value="1"/>
</dbReference>
<dbReference type="Pfam" id="PF00216">
    <property type="entry name" value="Bac_DNA_binding"/>
    <property type="match status" value="1"/>
</dbReference>
<dbReference type="PRINTS" id="PR01727">
    <property type="entry name" value="DNABINDINGHU"/>
</dbReference>
<dbReference type="SMART" id="SM00411">
    <property type="entry name" value="BHL"/>
    <property type="match status" value="1"/>
</dbReference>
<dbReference type="SUPFAM" id="SSF47729">
    <property type="entry name" value="IHF-like DNA-binding proteins"/>
    <property type="match status" value="1"/>
</dbReference>
<dbReference type="PROSITE" id="PS00045">
    <property type="entry name" value="HISTONE_LIKE"/>
    <property type="match status" value="1"/>
</dbReference>
<feature type="chain" id="PRO_0000105070" description="Integration host factor subunit beta">
    <location>
        <begin position="1"/>
        <end position="94"/>
    </location>
</feature>
<gene>
    <name evidence="1" type="primary">ihfB</name>
    <name evidence="1" type="synonym">himD</name>
    <name type="ordered locus">STM0982</name>
</gene>
<organism>
    <name type="scientific">Salmonella typhimurium (strain LT2 / SGSC1412 / ATCC 700720)</name>
    <dbReference type="NCBI Taxonomy" id="99287"/>
    <lineage>
        <taxon>Bacteria</taxon>
        <taxon>Pseudomonadati</taxon>
        <taxon>Pseudomonadota</taxon>
        <taxon>Gammaproteobacteria</taxon>
        <taxon>Enterobacterales</taxon>
        <taxon>Enterobacteriaceae</taxon>
        <taxon>Salmonella</taxon>
    </lineage>
</organism>